<evidence type="ECO:0000269" key="1">
    <source>
    </source>
</evidence>
<evidence type="ECO:0000269" key="2">
    <source>
    </source>
</evidence>
<evidence type="ECO:0000269" key="3">
    <source>
    </source>
</evidence>
<evidence type="ECO:0000269" key="4">
    <source>
    </source>
</evidence>
<evidence type="ECO:0000269" key="5">
    <source>
    </source>
</evidence>
<evidence type="ECO:0000305" key="6"/>
<dbReference type="EC" id="1.5.1.42"/>
<dbReference type="EMBL" id="U00096">
    <property type="protein sequence ID" value="AAC74092.2"/>
    <property type="molecule type" value="Genomic_DNA"/>
</dbReference>
<dbReference type="EMBL" id="AP009048">
    <property type="protein sequence ID" value="BAA35774.2"/>
    <property type="molecule type" value="Genomic_DNA"/>
</dbReference>
<dbReference type="PIR" id="E64842">
    <property type="entry name" value="E64842"/>
</dbReference>
<dbReference type="RefSeq" id="NP_415527.4">
    <property type="nucleotide sequence ID" value="NC_000913.3"/>
</dbReference>
<dbReference type="RefSeq" id="WP_001028083.1">
    <property type="nucleotide sequence ID" value="NZ_SSZK01000002.1"/>
</dbReference>
<dbReference type="SMR" id="P75893"/>
<dbReference type="BioGRID" id="4259548">
    <property type="interactions" value="8"/>
</dbReference>
<dbReference type="FunCoup" id="P75893">
    <property type="interactions" value="73"/>
</dbReference>
<dbReference type="STRING" id="511145.b1007"/>
<dbReference type="PaxDb" id="511145-b1007"/>
<dbReference type="EnsemblBacteria" id="AAC74092">
    <property type="protein sequence ID" value="AAC74092"/>
    <property type="gene ID" value="b1007"/>
</dbReference>
<dbReference type="GeneID" id="946594"/>
<dbReference type="KEGG" id="ecj:JW5138"/>
<dbReference type="KEGG" id="eco:b1007"/>
<dbReference type="KEGG" id="ecoc:C3026_06130"/>
<dbReference type="PATRIC" id="fig|1411691.4.peg.1264"/>
<dbReference type="EchoBASE" id="EB3614"/>
<dbReference type="eggNOG" id="COG1853">
    <property type="taxonomic scope" value="Bacteria"/>
</dbReference>
<dbReference type="HOGENOM" id="CLU_059021_2_2_6"/>
<dbReference type="InParanoid" id="P75893"/>
<dbReference type="OMA" id="QFCTGVT"/>
<dbReference type="OrthoDB" id="6401628at2"/>
<dbReference type="PhylomeDB" id="P75893"/>
<dbReference type="BioCyc" id="EcoCyc:G6518-MONOMER"/>
<dbReference type="BioCyc" id="MetaCyc:G6518-MONOMER"/>
<dbReference type="PRO" id="PR:P75893"/>
<dbReference type="Proteomes" id="UP000000625">
    <property type="component" value="Chromosome"/>
</dbReference>
<dbReference type="GO" id="GO:0010181">
    <property type="term" value="F:FMN binding"/>
    <property type="evidence" value="ECO:0007669"/>
    <property type="project" value="InterPro"/>
</dbReference>
<dbReference type="GO" id="GO:0052874">
    <property type="term" value="F:FMN reductase (NADH) activity"/>
    <property type="evidence" value="ECO:0000314"/>
    <property type="project" value="EcoCyc"/>
</dbReference>
<dbReference type="GO" id="GO:0008752">
    <property type="term" value="F:FMN reductase [NAD(P)H] activity"/>
    <property type="evidence" value="ECO:0007669"/>
    <property type="project" value="InterPro"/>
</dbReference>
<dbReference type="GO" id="GO:0042602">
    <property type="term" value="F:riboflavin reductase (NADPH) activity"/>
    <property type="evidence" value="ECO:0000314"/>
    <property type="project" value="UniProtKB"/>
</dbReference>
<dbReference type="GO" id="GO:0019740">
    <property type="term" value="P:nitrogen utilization"/>
    <property type="evidence" value="ECO:0000314"/>
    <property type="project" value="UniProtKB"/>
</dbReference>
<dbReference type="GO" id="GO:0006208">
    <property type="term" value="P:pyrimidine nucleobase catabolic process"/>
    <property type="evidence" value="ECO:0000315"/>
    <property type="project" value="EcoCyc"/>
</dbReference>
<dbReference type="GO" id="GO:0006212">
    <property type="term" value="P:uracil catabolic process"/>
    <property type="evidence" value="ECO:0000314"/>
    <property type="project" value="UniProtKB"/>
</dbReference>
<dbReference type="FunFam" id="2.30.110.10:FF:000002">
    <property type="entry name" value="FMN reductase (NADH) RutF"/>
    <property type="match status" value="1"/>
</dbReference>
<dbReference type="Gene3D" id="2.30.110.10">
    <property type="entry name" value="Electron Transport, Fmn-binding Protein, Chain A"/>
    <property type="match status" value="1"/>
</dbReference>
<dbReference type="HAMAP" id="MF_00833">
    <property type="entry name" value="RutF"/>
    <property type="match status" value="1"/>
</dbReference>
<dbReference type="InterPro" id="IPR002563">
    <property type="entry name" value="Flavin_Rdtase-like_dom"/>
</dbReference>
<dbReference type="InterPro" id="IPR050268">
    <property type="entry name" value="NADH-dep_flavin_reductase"/>
</dbReference>
<dbReference type="InterPro" id="IPR019917">
    <property type="entry name" value="RutF"/>
</dbReference>
<dbReference type="InterPro" id="IPR012349">
    <property type="entry name" value="Split_barrel_FMN-bd"/>
</dbReference>
<dbReference type="NCBIfam" id="TIGR03615">
    <property type="entry name" value="RutF"/>
    <property type="match status" value="1"/>
</dbReference>
<dbReference type="PANTHER" id="PTHR30466">
    <property type="entry name" value="FLAVIN REDUCTASE"/>
    <property type="match status" value="1"/>
</dbReference>
<dbReference type="PANTHER" id="PTHR30466:SF1">
    <property type="entry name" value="FMN REDUCTASE (NADH) RUTF"/>
    <property type="match status" value="1"/>
</dbReference>
<dbReference type="Pfam" id="PF01613">
    <property type="entry name" value="Flavin_Reduct"/>
    <property type="match status" value="1"/>
</dbReference>
<dbReference type="SMART" id="SM00903">
    <property type="entry name" value="Flavin_Reduct"/>
    <property type="match status" value="1"/>
</dbReference>
<dbReference type="SUPFAM" id="SSF50475">
    <property type="entry name" value="FMN-binding split barrel"/>
    <property type="match status" value="1"/>
</dbReference>
<name>RUTF_ECOLI</name>
<comment type="function">
    <text evidence="2 5">Catalyzes the reduction of FMN to FMNH2 which is used to reduce pyrimidine by RutA via the Rut pathway. In vitro, the flavin reductase Fre can substitute for the function of RutF, however, RutF is required for uracil utilization in vivo.</text>
</comment>
<comment type="catalytic activity">
    <reaction evidence="4">
        <text>FMNH2 + NAD(+) = FMN + NADH + 2 H(+)</text>
        <dbReference type="Rhea" id="RHEA:21620"/>
        <dbReference type="ChEBI" id="CHEBI:15378"/>
        <dbReference type="ChEBI" id="CHEBI:57540"/>
        <dbReference type="ChEBI" id="CHEBI:57618"/>
        <dbReference type="ChEBI" id="CHEBI:57945"/>
        <dbReference type="ChEBI" id="CHEBI:58210"/>
        <dbReference type="EC" id="1.5.1.42"/>
    </reaction>
</comment>
<comment type="induction">
    <text evidence="1 3">Up-regulated by the nitrogen regulatory protein C (NtrC also called GlnG) and repressed by RutR.</text>
</comment>
<comment type="disruption phenotype">
    <text evidence="5">Cells lacking this gene fail to grow on uridine as the sole source of nitrogen at room temperature.</text>
</comment>
<comment type="miscellaneous">
    <text>The Rut pathway degrades exogenous pyrimidines as the sole nitrogen source at room temperature but not at 37 degrees Celsius, a restriction that is apparently a consequence of an inadequate ability to remove toxic malonic semialdehyde at the higher temperature (RutE/YdfG function).</text>
</comment>
<comment type="similarity">
    <text evidence="6">Belongs to the non-flavoprotein flavin reductase family. RutF subfamily.</text>
</comment>
<feature type="chain" id="PRO_0000085537" description="FMN reductase (NADH) RutF">
    <location>
        <begin position="1"/>
        <end position="164"/>
    </location>
</feature>
<accession>P75893</accession>
<reference key="1">
    <citation type="journal article" date="1996" name="DNA Res.">
        <title>A 718-kb DNA sequence of the Escherichia coli K-12 genome corresponding to the 12.7-28.0 min region on the linkage map.</title>
        <authorList>
            <person name="Oshima T."/>
            <person name="Aiba H."/>
            <person name="Baba T."/>
            <person name="Fujita K."/>
            <person name="Hayashi K."/>
            <person name="Honjo A."/>
            <person name="Ikemoto K."/>
            <person name="Inada T."/>
            <person name="Itoh T."/>
            <person name="Kajihara M."/>
            <person name="Kanai K."/>
            <person name="Kashimoto K."/>
            <person name="Kimura S."/>
            <person name="Kitagawa M."/>
            <person name="Makino K."/>
            <person name="Masuda S."/>
            <person name="Miki T."/>
            <person name="Mizobuchi K."/>
            <person name="Mori H."/>
            <person name="Motomura K."/>
            <person name="Nakamura Y."/>
            <person name="Nashimoto H."/>
            <person name="Nishio Y."/>
            <person name="Saito N."/>
            <person name="Sampei G."/>
            <person name="Seki Y."/>
            <person name="Tagami H."/>
            <person name="Takemoto K."/>
            <person name="Wada C."/>
            <person name="Yamamoto Y."/>
            <person name="Yano M."/>
            <person name="Horiuchi T."/>
        </authorList>
    </citation>
    <scope>NUCLEOTIDE SEQUENCE [LARGE SCALE GENOMIC DNA]</scope>
    <source>
        <strain>K12 / W3110 / ATCC 27325 / DSM 5911</strain>
    </source>
</reference>
<reference key="2">
    <citation type="journal article" date="1997" name="Science">
        <title>The complete genome sequence of Escherichia coli K-12.</title>
        <authorList>
            <person name="Blattner F.R."/>
            <person name="Plunkett G. III"/>
            <person name="Bloch C.A."/>
            <person name="Perna N.T."/>
            <person name="Burland V."/>
            <person name="Riley M."/>
            <person name="Collado-Vides J."/>
            <person name="Glasner J.D."/>
            <person name="Rode C.K."/>
            <person name="Mayhew G.F."/>
            <person name="Gregor J."/>
            <person name="Davis N.W."/>
            <person name="Kirkpatrick H.A."/>
            <person name="Goeden M.A."/>
            <person name="Rose D.J."/>
            <person name="Mau B."/>
            <person name="Shao Y."/>
        </authorList>
    </citation>
    <scope>NUCLEOTIDE SEQUENCE [LARGE SCALE GENOMIC DNA]</scope>
    <source>
        <strain>K12 / MG1655 / ATCC 47076</strain>
    </source>
</reference>
<reference key="3">
    <citation type="journal article" date="2006" name="Mol. Syst. Biol.">
        <title>Highly accurate genome sequences of Escherichia coli K-12 strains MG1655 and W3110.</title>
        <authorList>
            <person name="Hayashi K."/>
            <person name="Morooka N."/>
            <person name="Yamamoto Y."/>
            <person name="Fujita K."/>
            <person name="Isono K."/>
            <person name="Choi S."/>
            <person name="Ohtsubo E."/>
            <person name="Baba T."/>
            <person name="Wanner B.L."/>
            <person name="Mori H."/>
            <person name="Horiuchi T."/>
        </authorList>
    </citation>
    <scope>NUCLEOTIDE SEQUENCE [LARGE SCALE GENOMIC DNA]</scope>
    <source>
        <strain>K12 / W3110 / ATCC 27325 / DSM 5911</strain>
    </source>
</reference>
<reference key="4">
    <citation type="journal article" date="2000" name="Proc. Natl. Acad. Sci. U.S.A.">
        <title>Nitrogen regulatory protein C-controlled genes of Escherichia coli: scavenging as a defense against nitrogen limitation.</title>
        <authorList>
            <person name="Zimmer D.P."/>
            <person name="Soupene E."/>
            <person name="Lee H.L."/>
            <person name="Wendisch V.F."/>
            <person name="Khodursky A.B."/>
            <person name="Peter B.J."/>
            <person name="Bender R.A."/>
            <person name="Kustu S."/>
        </authorList>
    </citation>
    <scope>INDUCTION</scope>
</reference>
<reference key="5">
    <citation type="journal article" date="2006" name="Proc. Natl. Acad. Sci. U.S.A.">
        <title>A previously undescribed pathway for pyrimidine catabolism.</title>
        <authorList>
            <person name="Loh K.D."/>
            <person name="Gyaneshwar P."/>
            <person name="Markenscoff Papadimitriou E."/>
            <person name="Fong R."/>
            <person name="Kim K.-S."/>
            <person name="Parales R."/>
            <person name="Zhou Z."/>
            <person name="Inwood W."/>
            <person name="Kustu S."/>
        </authorList>
    </citation>
    <scope>FUNCTION IN PYRIMIDINE CATABOLISM</scope>
    <scope>NOMENCLATURE</scope>
    <source>
        <strain>K12 / MG1655 / ATCC 47076</strain>
    </source>
</reference>
<reference key="6">
    <citation type="journal article" date="2007" name="Mol. Microbiol.">
        <title>RutR is the uracil/thymine-sensing master regulator of a set of genes for synthesis and degradation of pyrimidines.</title>
        <authorList>
            <person name="Shimada T."/>
            <person name="Hirao K."/>
            <person name="Kori A."/>
            <person name="Yamamoto K."/>
            <person name="Ishihama A."/>
        </authorList>
    </citation>
    <scope>INDUCTION</scope>
</reference>
<reference key="7">
    <citation type="journal article" date="2010" name="J. Am. Chem. Soc.">
        <title>Catalysis of a flavoenzyme-mediated amide hydrolysis.</title>
        <authorList>
            <person name="Mukherjee T."/>
            <person name="Zhang Y."/>
            <person name="Abdelwahed S."/>
            <person name="Ealick S.E."/>
            <person name="Begley T.P."/>
        </authorList>
    </citation>
    <scope>REACTION MECHANISM</scope>
    <scope>CATALYTIC ACTIVITY</scope>
</reference>
<reference key="8">
    <citation type="journal article" date="2010" name="J. Bacteriol.">
        <title>The Rut pathway for pyrimidine degradation: novel chemistry and toxicity problems.</title>
        <authorList>
            <person name="Kim K.S."/>
            <person name="Pelton J.G."/>
            <person name="Inwood W.B."/>
            <person name="Andersen U."/>
            <person name="Kustu S."/>
            <person name="Wemmer D.E."/>
        </authorList>
    </citation>
    <scope>FUNCTION AS A FLAVIN REDUCTASE</scope>
    <scope>DISRUPTION PHENOTYPE</scope>
</reference>
<keyword id="KW-0285">Flavoprotein</keyword>
<keyword id="KW-0288">FMN</keyword>
<keyword id="KW-0520">NAD</keyword>
<keyword id="KW-0560">Oxidoreductase</keyword>
<keyword id="KW-1185">Reference proteome</keyword>
<sequence length="164" mass="17749">MNIVDQQTFRDAMSCMGAAVNIITTDGPAGRAGFTASAVCSVTDTPPTLLVCLNRGASVWPAFNENRTLCVNTLSAGQEPLSNLFGGKTPMEHRFAAARWQTGVTGCPQLEEALVSFDCRISQVVSVGTHDILFCAIEAIHRHTTPYGLVWFDRSYHALMRPAC</sequence>
<organism>
    <name type="scientific">Escherichia coli (strain K12)</name>
    <dbReference type="NCBI Taxonomy" id="83333"/>
    <lineage>
        <taxon>Bacteria</taxon>
        <taxon>Pseudomonadati</taxon>
        <taxon>Pseudomonadota</taxon>
        <taxon>Gammaproteobacteria</taxon>
        <taxon>Enterobacterales</taxon>
        <taxon>Enterobacteriaceae</taxon>
        <taxon>Escherichia</taxon>
    </lineage>
</organism>
<proteinExistence type="evidence at protein level"/>
<gene>
    <name type="primary">rutF</name>
    <name type="synonym">ycdH</name>
    <name type="ordered locus">b1007</name>
    <name type="ordered locus">JW5138</name>
</gene>
<protein>
    <recommendedName>
        <fullName>FMN reductase (NADH) RutF</fullName>
        <ecNumber>1.5.1.42</ecNumber>
    </recommendedName>
    <alternativeName>
        <fullName>FMN reductase</fullName>
    </alternativeName>
    <alternativeName>
        <fullName>NADH-flavin reductase RutF</fullName>
    </alternativeName>
    <alternativeName>
        <fullName>NADH:flavin oxidoreductase</fullName>
    </alternativeName>
</protein>